<comment type="catalytic activity">
    <reaction evidence="1">
        <text>L-histidinol phosphate + 2-oxoglutarate = 3-(imidazol-4-yl)-2-oxopropyl phosphate + L-glutamate</text>
        <dbReference type="Rhea" id="RHEA:23744"/>
        <dbReference type="ChEBI" id="CHEBI:16810"/>
        <dbReference type="ChEBI" id="CHEBI:29985"/>
        <dbReference type="ChEBI" id="CHEBI:57766"/>
        <dbReference type="ChEBI" id="CHEBI:57980"/>
        <dbReference type="EC" id="2.6.1.9"/>
    </reaction>
</comment>
<comment type="cofactor">
    <cofactor evidence="1">
        <name>pyridoxal 5'-phosphate</name>
        <dbReference type="ChEBI" id="CHEBI:597326"/>
    </cofactor>
</comment>
<comment type="pathway">
    <text evidence="1">Amino-acid biosynthesis; L-histidine biosynthesis; L-histidine from 5-phospho-alpha-D-ribose 1-diphosphate: step 7/9.</text>
</comment>
<comment type="subunit">
    <text evidence="1">Homodimer.</text>
</comment>
<comment type="similarity">
    <text evidence="1">Belongs to the class-II pyridoxal-phosphate-dependent aminotransferase family. Histidinol-phosphate aminotransferase subfamily.</text>
</comment>
<organism>
    <name type="scientific">Mycobacterium marinum (strain ATCC BAA-535 / M)</name>
    <dbReference type="NCBI Taxonomy" id="216594"/>
    <lineage>
        <taxon>Bacteria</taxon>
        <taxon>Bacillati</taxon>
        <taxon>Actinomycetota</taxon>
        <taxon>Actinomycetes</taxon>
        <taxon>Mycobacteriales</taxon>
        <taxon>Mycobacteriaceae</taxon>
        <taxon>Mycobacterium</taxon>
        <taxon>Mycobacterium ulcerans group</taxon>
    </lineage>
</organism>
<proteinExistence type="inferred from homology"/>
<accession>B2HQA3</accession>
<feature type="chain" id="PRO_1000135410" description="Histidinol-phosphate aminotransferase">
    <location>
        <begin position="1"/>
        <end position="382"/>
    </location>
</feature>
<feature type="region of interest" description="Disordered" evidence="2">
    <location>
        <begin position="1"/>
        <end position="28"/>
    </location>
</feature>
<feature type="compositionally biased region" description="Basic and acidic residues" evidence="2">
    <location>
        <begin position="9"/>
        <end position="22"/>
    </location>
</feature>
<feature type="modified residue" description="N6-(pyridoxal phosphate)lysine" evidence="1">
    <location>
        <position position="233"/>
    </location>
</feature>
<gene>
    <name evidence="1" type="primary">hisC</name>
    <name type="ordered locus">MMAR_2396</name>
</gene>
<protein>
    <recommendedName>
        <fullName evidence="1">Histidinol-phosphate aminotransferase</fullName>
        <ecNumber evidence="1">2.6.1.9</ecNumber>
    </recommendedName>
    <alternativeName>
        <fullName evidence="1">Imidazole acetol-phosphate transaminase</fullName>
    </alternativeName>
</protein>
<evidence type="ECO:0000255" key="1">
    <source>
        <dbReference type="HAMAP-Rule" id="MF_01023"/>
    </source>
</evidence>
<evidence type="ECO:0000256" key="2">
    <source>
        <dbReference type="SAM" id="MobiDB-lite"/>
    </source>
</evidence>
<reference key="1">
    <citation type="journal article" date="2008" name="Genome Res.">
        <title>Insights from the complete genome sequence of Mycobacterium marinum on the evolution of Mycobacterium tuberculosis.</title>
        <authorList>
            <person name="Stinear T.P."/>
            <person name="Seemann T."/>
            <person name="Harrison P.F."/>
            <person name="Jenkin G.A."/>
            <person name="Davies J.K."/>
            <person name="Johnson P.D."/>
            <person name="Abdellah Z."/>
            <person name="Arrowsmith C."/>
            <person name="Chillingworth T."/>
            <person name="Churcher C."/>
            <person name="Clarke K."/>
            <person name="Cronin A."/>
            <person name="Davis P."/>
            <person name="Goodhead I."/>
            <person name="Holroyd N."/>
            <person name="Jagels K."/>
            <person name="Lord A."/>
            <person name="Moule S."/>
            <person name="Mungall K."/>
            <person name="Norbertczak H."/>
            <person name="Quail M.A."/>
            <person name="Rabbinowitsch E."/>
            <person name="Walker D."/>
            <person name="White B."/>
            <person name="Whitehead S."/>
            <person name="Small P.L."/>
            <person name="Brosch R."/>
            <person name="Ramakrishnan L."/>
            <person name="Fischbach M.A."/>
            <person name="Parkhill J."/>
            <person name="Cole S.T."/>
        </authorList>
    </citation>
    <scope>NUCLEOTIDE SEQUENCE [LARGE SCALE GENOMIC DNA]</scope>
    <source>
        <strain>ATCC BAA-535 / M</strain>
    </source>
</reference>
<name>HIS8_MYCMM</name>
<keyword id="KW-0028">Amino-acid biosynthesis</keyword>
<keyword id="KW-0032">Aminotransferase</keyword>
<keyword id="KW-0368">Histidine biosynthesis</keyword>
<keyword id="KW-0663">Pyridoxal phosphate</keyword>
<keyword id="KW-1185">Reference proteome</keyword>
<keyword id="KW-0808">Transferase</keyword>
<sequence length="382" mass="40866">MTSAPRPRPTLDDLPLREDLRGKSPYGAPQLAVPVRLNTNENPHPPTQALVDDVVRSVGEAAVDLHRYPDRDAVALRTDLANYLTAQTGTRIGFENVWAANGSNEILQQLLQAFGGPGRTAIGFVPSYSMHPIISDGTHTEWVETARADGFGLDIDAAIAVVSDRRPDVVFITSPNNPTGQSVSLTELRRLLDVVPGILIVDEAYGEFSSQPSAVGLIEEYPTRLVVTRTMSKAFAFAGGRLGYLVATPALIDALLLVRLPYHLSSVTQVAARAALRHAQDTLGSVATLIAERERVSKKLAGMGFRVIPSDANFVLFGEFADAPAAWQRYLDQGVLIRDVGIPGYLRATTGLADENDAFLRASARIAATDLAPAAASPVGAP</sequence>
<dbReference type="EC" id="2.6.1.9" evidence="1"/>
<dbReference type="EMBL" id="CP000854">
    <property type="protein sequence ID" value="ACC40846.1"/>
    <property type="molecule type" value="Genomic_DNA"/>
</dbReference>
<dbReference type="RefSeq" id="WP_012394144.1">
    <property type="nucleotide sequence ID" value="NC_010612.1"/>
</dbReference>
<dbReference type="SMR" id="B2HQA3"/>
<dbReference type="STRING" id="216594.MMAR_2396"/>
<dbReference type="GeneID" id="93437383"/>
<dbReference type="KEGG" id="mmi:MMAR_2396"/>
<dbReference type="eggNOG" id="COG0079">
    <property type="taxonomic scope" value="Bacteria"/>
</dbReference>
<dbReference type="HOGENOM" id="CLU_017584_3_1_11"/>
<dbReference type="OrthoDB" id="9809616at2"/>
<dbReference type="UniPathway" id="UPA00031">
    <property type="reaction ID" value="UER00012"/>
</dbReference>
<dbReference type="Proteomes" id="UP000001190">
    <property type="component" value="Chromosome"/>
</dbReference>
<dbReference type="GO" id="GO:0004400">
    <property type="term" value="F:histidinol-phosphate transaminase activity"/>
    <property type="evidence" value="ECO:0007669"/>
    <property type="project" value="UniProtKB-UniRule"/>
</dbReference>
<dbReference type="GO" id="GO:0030170">
    <property type="term" value="F:pyridoxal phosphate binding"/>
    <property type="evidence" value="ECO:0007669"/>
    <property type="project" value="InterPro"/>
</dbReference>
<dbReference type="GO" id="GO:0000105">
    <property type="term" value="P:L-histidine biosynthetic process"/>
    <property type="evidence" value="ECO:0007669"/>
    <property type="project" value="UniProtKB-UniRule"/>
</dbReference>
<dbReference type="CDD" id="cd00609">
    <property type="entry name" value="AAT_like"/>
    <property type="match status" value="1"/>
</dbReference>
<dbReference type="Gene3D" id="3.90.1150.10">
    <property type="entry name" value="Aspartate Aminotransferase, domain 1"/>
    <property type="match status" value="1"/>
</dbReference>
<dbReference type="Gene3D" id="3.40.640.10">
    <property type="entry name" value="Type I PLP-dependent aspartate aminotransferase-like (Major domain)"/>
    <property type="match status" value="1"/>
</dbReference>
<dbReference type="HAMAP" id="MF_01023">
    <property type="entry name" value="HisC_aminotrans_2"/>
    <property type="match status" value="1"/>
</dbReference>
<dbReference type="InterPro" id="IPR001917">
    <property type="entry name" value="Aminotrans_II_pyridoxalP_BS"/>
</dbReference>
<dbReference type="InterPro" id="IPR004839">
    <property type="entry name" value="Aminotransferase_I/II_large"/>
</dbReference>
<dbReference type="InterPro" id="IPR005861">
    <property type="entry name" value="HisP_aminotrans"/>
</dbReference>
<dbReference type="InterPro" id="IPR015424">
    <property type="entry name" value="PyrdxlP-dep_Trfase"/>
</dbReference>
<dbReference type="InterPro" id="IPR015421">
    <property type="entry name" value="PyrdxlP-dep_Trfase_major"/>
</dbReference>
<dbReference type="InterPro" id="IPR015422">
    <property type="entry name" value="PyrdxlP-dep_Trfase_small"/>
</dbReference>
<dbReference type="NCBIfam" id="TIGR01141">
    <property type="entry name" value="hisC"/>
    <property type="match status" value="1"/>
</dbReference>
<dbReference type="NCBIfam" id="NF002877">
    <property type="entry name" value="PRK03317.1"/>
    <property type="match status" value="1"/>
</dbReference>
<dbReference type="PANTHER" id="PTHR42885:SF2">
    <property type="entry name" value="HISTIDINOL-PHOSPHATE AMINOTRANSFERASE"/>
    <property type="match status" value="1"/>
</dbReference>
<dbReference type="PANTHER" id="PTHR42885">
    <property type="entry name" value="HISTIDINOL-PHOSPHATE AMINOTRANSFERASE-RELATED"/>
    <property type="match status" value="1"/>
</dbReference>
<dbReference type="Pfam" id="PF00155">
    <property type="entry name" value="Aminotran_1_2"/>
    <property type="match status" value="1"/>
</dbReference>
<dbReference type="SUPFAM" id="SSF53383">
    <property type="entry name" value="PLP-dependent transferases"/>
    <property type="match status" value="1"/>
</dbReference>
<dbReference type="PROSITE" id="PS00599">
    <property type="entry name" value="AA_TRANSFER_CLASS_2"/>
    <property type="match status" value="1"/>
</dbReference>